<dbReference type="EC" id="3.1.26.4" evidence="1"/>
<dbReference type="EMBL" id="AE017283">
    <property type="protein sequence ID" value="AAT83182.1"/>
    <property type="molecule type" value="Genomic_DNA"/>
</dbReference>
<dbReference type="RefSeq" id="WP_002519329.1">
    <property type="nucleotide sequence ID" value="NC_006085.1"/>
</dbReference>
<dbReference type="SMR" id="Q6A7T3"/>
<dbReference type="EnsemblBacteria" id="AAT83182">
    <property type="protein sequence ID" value="AAT83182"/>
    <property type="gene ID" value="PPA1433"/>
</dbReference>
<dbReference type="KEGG" id="pac:PPA1433"/>
<dbReference type="eggNOG" id="COG0164">
    <property type="taxonomic scope" value="Bacteria"/>
</dbReference>
<dbReference type="HOGENOM" id="CLU_036532_1_0_11"/>
<dbReference type="Proteomes" id="UP000000603">
    <property type="component" value="Chromosome"/>
</dbReference>
<dbReference type="GO" id="GO:0005737">
    <property type="term" value="C:cytoplasm"/>
    <property type="evidence" value="ECO:0007669"/>
    <property type="project" value="UniProtKB-SubCell"/>
</dbReference>
<dbReference type="GO" id="GO:0032299">
    <property type="term" value="C:ribonuclease H2 complex"/>
    <property type="evidence" value="ECO:0007669"/>
    <property type="project" value="TreeGrafter"/>
</dbReference>
<dbReference type="GO" id="GO:0030145">
    <property type="term" value="F:manganese ion binding"/>
    <property type="evidence" value="ECO:0007669"/>
    <property type="project" value="UniProtKB-UniRule"/>
</dbReference>
<dbReference type="GO" id="GO:0003723">
    <property type="term" value="F:RNA binding"/>
    <property type="evidence" value="ECO:0007669"/>
    <property type="project" value="InterPro"/>
</dbReference>
<dbReference type="GO" id="GO:0004523">
    <property type="term" value="F:RNA-DNA hybrid ribonuclease activity"/>
    <property type="evidence" value="ECO:0007669"/>
    <property type="project" value="UniProtKB-UniRule"/>
</dbReference>
<dbReference type="GO" id="GO:0043137">
    <property type="term" value="P:DNA replication, removal of RNA primer"/>
    <property type="evidence" value="ECO:0007669"/>
    <property type="project" value="TreeGrafter"/>
</dbReference>
<dbReference type="GO" id="GO:0006298">
    <property type="term" value="P:mismatch repair"/>
    <property type="evidence" value="ECO:0007669"/>
    <property type="project" value="TreeGrafter"/>
</dbReference>
<dbReference type="CDD" id="cd07182">
    <property type="entry name" value="RNase_HII_bacteria_HII_like"/>
    <property type="match status" value="1"/>
</dbReference>
<dbReference type="Gene3D" id="3.30.420.10">
    <property type="entry name" value="Ribonuclease H-like superfamily/Ribonuclease H"/>
    <property type="match status" value="1"/>
</dbReference>
<dbReference type="HAMAP" id="MF_00052_B">
    <property type="entry name" value="RNase_HII_B"/>
    <property type="match status" value="1"/>
</dbReference>
<dbReference type="InterPro" id="IPR022898">
    <property type="entry name" value="RNase_HII"/>
</dbReference>
<dbReference type="InterPro" id="IPR001352">
    <property type="entry name" value="RNase_HII/HIII"/>
</dbReference>
<dbReference type="InterPro" id="IPR024567">
    <property type="entry name" value="RNase_HII/HIII_dom"/>
</dbReference>
<dbReference type="InterPro" id="IPR012337">
    <property type="entry name" value="RNaseH-like_sf"/>
</dbReference>
<dbReference type="InterPro" id="IPR036397">
    <property type="entry name" value="RNaseH_sf"/>
</dbReference>
<dbReference type="NCBIfam" id="NF000595">
    <property type="entry name" value="PRK00015.1-3"/>
    <property type="match status" value="1"/>
</dbReference>
<dbReference type="NCBIfam" id="NF000598">
    <property type="entry name" value="PRK00015.2-2"/>
    <property type="match status" value="1"/>
</dbReference>
<dbReference type="PANTHER" id="PTHR10954">
    <property type="entry name" value="RIBONUCLEASE H2 SUBUNIT A"/>
    <property type="match status" value="1"/>
</dbReference>
<dbReference type="PANTHER" id="PTHR10954:SF18">
    <property type="entry name" value="RIBONUCLEASE HII"/>
    <property type="match status" value="1"/>
</dbReference>
<dbReference type="Pfam" id="PF01351">
    <property type="entry name" value="RNase_HII"/>
    <property type="match status" value="1"/>
</dbReference>
<dbReference type="SUPFAM" id="SSF53098">
    <property type="entry name" value="Ribonuclease H-like"/>
    <property type="match status" value="1"/>
</dbReference>
<dbReference type="PROSITE" id="PS51975">
    <property type="entry name" value="RNASE_H_2"/>
    <property type="match status" value="1"/>
</dbReference>
<keyword id="KW-0963">Cytoplasm</keyword>
<keyword id="KW-0255">Endonuclease</keyword>
<keyword id="KW-0378">Hydrolase</keyword>
<keyword id="KW-0464">Manganese</keyword>
<keyword id="KW-0479">Metal-binding</keyword>
<keyword id="KW-0540">Nuclease</keyword>
<reference key="1">
    <citation type="journal article" date="2004" name="Science">
        <title>The complete genome sequence of Propionibacterium acnes, a commensal of human skin.</title>
        <authorList>
            <person name="Brueggemann H."/>
            <person name="Henne A."/>
            <person name="Hoster F."/>
            <person name="Liesegang H."/>
            <person name="Wiezer A."/>
            <person name="Strittmatter A."/>
            <person name="Hujer S."/>
            <person name="Duerre P."/>
            <person name="Gottschalk G."/>
        </authorList>
    </citation>
    <scope>NUCLEOTIDE SEQUENCE [LARGE SCALE GENOMIC DNA]</scope>
    <source>
        <strain>DSM 16379 / KPA171202</strain>
    </source>
</reference>
<comment type="function">
    <text evidence="1">Endonuclease that specifically degrades the RNA of RNA-DNA hybrids.</text>
</comment>
<comment type="catalytic activity">
    <reaction evidence="1">
        <text>Endonucleolytic cleavage to 5'-phosphomonoester.</text>
        <dbReference type="EC" id="3.1.26.4"/>
    </reaction>
</comment>
<comment type="cofactor">
    <cofactor evidence="1">
        <name>Mn(2+)</name>
        <dbReference type="ChEBI" id="CHEBI:29035"/>
    </cofactor>
    <cofactor evidence="1">
        <name>Mg(2+)</name>
        <dbReference type="ChEBI" id="CHEBI:18420"/>
    </cofactor>
    <text evidence="1">Manganese or magnesium. Binds 1 divalent metal ion per monomer in the absence of substrate. May bind a second metal ion after substrate binding.</text>
</comment>
<comment type="subcellular location">
    <subcellularLocation>
        <location evidence="1">Cytoplasm</location>
    </subcellularLocation>
</comment>
<comment type="similarity">
    <text evidence="1">Belongs to the RNase HII family.</text>
</comment>
<organism>
    <name type="scientific">Cutibacterium acnes (strain DSM 16379 / KPA171202)</name>
    <name type="common">Propionibacterium acnes</name>
    <dbReference type="NCBI Taxonomy" id="267747"/>
    <lineage>
        <taxon>Bacteria</taxon>
        <taxon>Bacillati</taxon>
        <taxon>Actinomycetota</taxon>
        <taxon>Actinomycetes</taxon>
        <taxon>Propionibacteriales</taxon>
        <taxon>Propionibacteriaceae</taxon>
        <taxon>Cutibacterium</taxon>
    </lineage>
</organism>
<proteinExistence type="inferred from homology"/>
<gene>
    <name evidence="1" type="primary">rnhB</name>
    <name type="ordered locus">PPA1433</name>
</gene>
<protein>
    <recommendedName>
        <fullName evidence="1">Ribonuclease HII</fullName>
        <shortName evidence="1">RNase HII</shortName>
        <ecNumber evidence="1">3.1.26.4</ecNumber>
    </recommendedName>
</protein>
<accession>Q6A7T3</accession>
<name>RNH2_CUTAK</name>
<sequence>MGHERALARAGLGPVAGCDEAGRGACAGPLVAAAVILDDRRSGRIAGLADSKTLSAAKREALFNVIMDKALAVSWVRVEADECDRLGMQEADISGLRRAVVRLGVEPGYVLSDGFPVDGLTVPDLGMWKGDSVCACVAAASIVAKVARDRIMIAMDAEIPGYDFAVHKGYATALHQRRLKELGPSRQHRMSYANVRRAARLHSS</sequence>
<evidence type="ECO:0000255" key="1">
    <source>
        <dbReference type="HAMAP-Rule" id="MF_00052"/>
    </source>
</evidence>
<evidence type="ECO:0000255" key="2">
    <source>
        <dbReference type="PROSITE-ProRule" id="PRU01319"/>
    </source>
</evidence>
<feature type="chain" id="PRO_0000235751" description="Ribonuclease HII">
    <location>
        <begin position="1"/>
        <end position="204"/>
    </location>
</feature>
<feature type="domain" description="RNase H type-2" evidence="2">
    <location>
        <begin position="13"/>
        <end position="204"/>
    </location>
</feature>
<feature type="binding site" evidence="1">
    <location>
        <position position="19"/>
    </location>
    <ligand>
        <name>a divalent metal cation</name>
        <dbReference type="ChEBI" id="CHEBI:60240"/>
    </ligand>
</feature>
<feature type="binding site" evidence="1">
    <location>
        <position position="20"/>
    </location>
    <ligand>
        <name>a divalent metal cation</name>
        <dbReference type="ChEBI" id="CHEBI:60240"/>
    </ligand>
</feature>
<feature type="binding site" evidence="1">
    <location>
        <position position="113"/>
    </location>
    <ligand>
        <name>a divalent metal cation</name>
        <dbReference type="ChEBI" id="CHEBI:60240"/>
    </ligand>
</feature>